<protein>
    <recommendedName>
        <fullName evidence="1">CTP synthase</fullName>
        <ecNumber evidence="1">6.3.4.2</ecNumber>
    </recommendedName>
    <alternativeName>
        <fullName evidence="1">Cytidine 5'-triphosphate synthase</fullName>
    </alternativeName>
    <alternativeName>
        <fullName evidence="1">Cytidine triphosphate synthetase</fullName>
        <shortName evidence="1">CTP synthetase</shortName>
        <shortName evidence="1">CTPS</shortName>
    </alternativeName>
    <alternativeName>
        <fullName evidence="1">UTP--ammonia ligase</fullName>
    </alternativeName>
</protein>
<gene>
    <name evidence="1" type="primary">pyrG</name>
    <name type="ordered locus">Cpar_0097</name>
</gene>
<keyword id="KW-0067">ATP-binding</keyword>
<keyword id="KW-0315">Glutamine amidotransferase</keyword>
<keyword id="KW-0436">Ligase</keyword>
<keyword id="KW-0460">Magnesium</keyword>
<keyword id="KW-0479">Metal-binding</keyword>
<keyword id="KW-0547">Nucleotide-binding</keyword>
<keyword id="KW-0665">Pyrimidine biosynthesis</keyword>
<name>PYRG_CHLP8</name>
<reference key="1">
    <citation type="submission" date="2008-06" db="EMBL/GenBank/DDBJ databases">
        <title>Complete sequence of Chlorobaculum parvum NCIB 8327.</title>
        <authorList>
            <consortium name="US DOE Joint Genome Institute"/>
            <person name="Lucas S."/>
            <person name="Copeland A."/>
            <person name="Lapidus A."/>
            <person name="Glavina del Rio T."/>
            <person name="Dalin E."/>
            <person name="Tice H."/>
            <person name="Bruce D."/>
            <person name="Goodwin L."/>
            <person name="Pitluck S."/>
            <person name="Schmutz J."/>
            <person name="Larimer F."/>
            <person name="Land M."/>
            <person name="Hauser L."/>
            <person name="Kyrpides N."/>
            <person name="Mikhailova N."/>
            <person name="Zhao F."/>
            <person name="Li T."/>
            <person name="Liu Z."/>
            <person name="Overmann J."/>
            <person name="Bryant D.A."/>
            <person name="Richardson P."/>
        </authorList>
    </citation>
    <scope>NUCLEOTIDE SEQUENCE [LARGE SCALE GENOMIC DNA]</scope>
    <source>
        <strain>DSM 263 / NCIMB 8327</strain>
    </source>
</reference>
<accession>B3QRL0</accession>
<comment type="function">
    <text evidence="1">Catalyzes the ATP-dependent amination of UTP to CTP with either L-glutamine or ammonia as the source of nitrogen. Regulates intracellular CTP levels through interactions with the four ribonucleotide triphosphates.</text>
</comment>
<comment type="catalytic activity">
    <reaction evidence="1">
        <text>UTP + L-glutamine + ATP + H2O = CTP + L-glutamate + ADP + phosphate + 2 H(+)</text>
        <dbReference type="Rhea" id="RHEA:26426"/>
        <dbReference type="ChEBI" id="CHEBI:15377"/>
        <dbReference type="ChEBI" id="CHEBI:15378"/>
        <dbReference type="ChEBI" id="CHEBI:29985"/>
        <dbReference type="ChEBI" id="CHEBI:30616"/>
        <dbReference type="ChEBI" id="CHEBI:37563"/>
        <dbReference type="ChEBI" id="CHEBI:43474"/>
        <dbReference type="ChEBI" id="CHEBI:46398"/>
        <dbReference type="ChEBI" id="CHEBI:58359"/>
        <dbReference type="ChEBI" id="CHEBI:456216"/>
        <dbReference type="EC" id="6.3.4.2"/>
    </reaction>
</comment>
<comment type="catalytic activity">
    <reaction evidence="1">
        <text>L-glutamine + H2O = L-glutamate + NH4(+)</text>
        <dbReference type="Rhea" id="RHEA:15889"/>
        <dbReference type="ChEBI" id="CHEBI:15377"/>
        <dbReference type="ChEBI" id="CHEBI:28938"/>
        <dbReference type="ChEBI" id="CHEBI:29985"/>
        <dbReference type="ChEBI" id="CHEBI:58359"/>
    </reaction>
</comment>
<comment type="catalytic activity">
    <reaction evidence="1">
        <text>UTP + NH4(+) + ATP = CTP + ADP + phosphate + 2 H(+)</text>
        <dbReference type="Rhea" id="RHEA:16597"/>
        <dbReference type="ChEBI" id="CHEBI:15378"/>
        <dbReference type="ChEBI" id="CHEBI:28938"/>
        <dbReference type="ChEBI" id="CHEBI:30616"/>
        <dbReference type="ChEBI" id="CHEBI:37563"/>
        <dbReference type="ChEBI" id="CHEBI:43474"/>
        <dbReference type="ChEBI" id="CHEBI:46398"/>
        <dbReference type="ChEBI" id="CHEBI:456216"/>
    </reaction>
</comment>
<comment type="activity regulation">
    <text evidence="1">Allosterically activated by GTP, when glutamine is the substrate; GTP has no effect on the reaction when ammonia is the substrate. The allosteric effector GTP functions by stabilizing the protein conformation that binds the tetrahedral intermediate(s) formed during glutamine hydrolysis. Inhibited by the product CTP, via allosteric rather than competitive inhibition.</text>
</comment>
<comment type="pathway">
    <text evidence="1">Pyrimidine metabolism; CTP biosynthesis via de novo pathway; CTP from UDP: step 2/2.</text>
</comment>
<comment type="subunit">
    <text evidence="1">Homotetramer.</text>
</comment>
<comment type="miscellaneous">
    <text evidence="1">CTPSs have evolved a hybrid strategy for distinguishing between UTP and CTP. The overlapping regions of the product feedback inhibitory and substrate sites recognize a common feature in both compounds, the triphosphate moiety. To differentiate isosteric substrate and product pyrimidine rings, an additional pocket far from the expected kinase/ligase catalytic site, specifically recognizes the cytosine and ribose portions of the product inhibitor.</text>
</comment>
<comment type="similarity">
    <text evidence="1">Belongs to the CTP synthase family.</text>
</comment>
<organism>
    <name type="scientific">Chlorobaculum parvum (strain DSM 263 / NCIMB 8327)</name>
    <name type="common">Chlorobium vibrioforme subsp. thiosulfatophilum</name>
    <dbReference type="NCBI Taxonomy" id="517417"/>
    <lineage>
        <taxon>Bacteria</taxon>
        <taxon>Pseudomonadati</taxon>
        <taxon>Chlorobiota</taxon>
        <taxon>Chlorobiia</taxon>
        <taxon>Chlorobiales</taxon>
        <taxon>Chlorobiaceae</taxon>
        <taxon>Chlorobaculum</taxon>
    </lineage>
</organism>
<sequence length="565" mass="63735">MARPKNVKHIFVTGGVISSLGKGILSASLGMLLKSRGLRVAIQKYDPYINVDPGTMSPYQHGEVYVTDDGAETDLDLGHYERFLDEPTSQASNLTMGRVYKSVIDKERRGEYLGGTVQVVPHVIDEIKEKMNDLAKNGSLDVLITEIGGTIGDIESLPFLEAMRQLKLELGDRNVLNIHLTFVPYIKAASELKTKPTQHSVKMLLETGIQPDILVCRSEKPLSREIKNKVGHFCNVHEQDVIGLNDCETIYAVPLMLLREQLDLRVMKKLGLKKFREPNLEHWKRFCEKVTNPKDGEITIGVCGKYTEYPDAYKSIIEAFIHAGASNDVKVSVKMLRAEDAEDSSFNMNKAFEGVSGLLVAPGFGDRGIEGKVQFVQYARENNIPFFGICLGMQCASIEFARNVCDLPDANSTEFNKRARFPVIDLMEQQKKVKEKGGTMRLGSYPCILKEGSKVHEVYGKFLINERHRHRYEFNNQFRKLFEEKGMIFSGTSPNGELVEIIELKEHRWFVAVQFHPELKSRVQKVHPLFDGFVQAAKEFAMGKRQLTLEDELPRLSSEEMEGAG</sequence>
<feature type="chain" id="PRO_1000139415" description="CTP synthase">
    <location>
        <begin position="1"/>
        <end position="565"/>
    </location>
</feature>
<feature type="domain" description="Glutamine amidotransferase type-1" evidence="1">
    <location>
        <begin position="299"/>
        <end position="543"/>
    </location>
</feature>
<feature type="region of interest" description="Amidoligase domain" evidence="1">
    <location>
        <begin position="1"/>
        <end position="272"/>
    </location>
</feature>
<feature type="active site" description="Nucleophile; for glutamine hydrolysis" evidence="1">
    <location>
        <position position="390"/>
    </location>
</feature>
<feature type="active site" evidence="1">
    <location>
        <position position="516"/>
    </location>
</feature>
<feature type="active site" evidence="1">
    <location>
        <position position="518"/>
    </location>
</feature>
<feature type="binding site" evidence="1">
    <location>
        <position position="18"/>
    </location>
    <ligand>
        <name>CTP</name>
        <dbReference type="ChEBI" id="CHEBI:37563"/>
        <note>allosteric inhibitor</note>
    </ligand>
</feature>
<feature type="binding site" evidence="1">
    <location>
        <position position="18"/>
    </location>
    <ligand>
        <name>UTP</name>
        <dbReference type="ChEBI" id="CHEBI:46398"/>
    </ligand>
</feature>
<feature type="binding site" evidence="1">
    <location>
        <begin position="19"/>
        <end position="24"/>
    </location>
    <ligand>
        <name>ATP</name>
        <dbReference type="ChEBI" id="CHEBI:30616"/>
    </ligand>
</feature>
<feature type="binding site" evidence="1">
    <location>
        <position position="59"/>
    </location>
    <ligand>
        <name>L-glutamine</name>
        <dbReference type="ChEBI" id="CHEBI:58359"/>
    </ligand>
</feature>
<feature type="binding site" evidence="1">
    <location>
        <position position="76"/>
    </location>
    <ligand>
        <name>ATP</name>
        <dbReference type="ChEBI" id="CHEBI:30616"/>
    </ligand>
</feature>
<feature type="binding site" evidence="1">
    <location>
        <position position="76"/>
    </location>
    <ligand>
        <name>Mg(2+)</name>
        <dbReference type="ChEBI" id="CHEBI:18420"/>
    </ligand>
</feature>
<feature type="binding site" evidence="1">
    <location>
        <position position="146"/>
    </location>
    <ligand>
        <name>Mg(2+)</name>
        <dbReference type="ChEBI" id="CHEBI:18420"/>
    </ligand>
</feature>
<feature type="binding site" evidence="1">
    <location>
        <begin position="153"/>
        <end position="155"/>
    </location>
    <ligand>
        <name>CTP</name>
        <dbReference type="ChEBI" id="CHEBI:37563"/>
        <note>allosteric inhibitor</note>
    </ligand>
</feature>
<feature type="binding site" evidence="1">
    <location>
        <begin position="193"/>
        <end position="198"/>
    </location>
    <ligand>
        <name>CTP</name>
        <dbReference type="ChEBI" id="CHEBI:37563"/>
        <note>allosteric inhibitor</note>
    </ligand>
</feature>
<feature type="binding site" evidence="1">
    <location>
        <begin position="193"/>
        <end position="198"/>
    </location>
    <ligand>
        <name>UTP</name>
        <dbReference type="ChEBI" id="CHEBI:46398"/>
    </ligand>
</feature>
<feature type="binding site" evidence="1">
    <location>
        <position position="229"/>
    </location>
    <ligand>
        <name>CTP</name>
        <dbReference type="ChEBI" id="CHEBI:37563"/>
        <note>allosteric inhibitor</note>
    </ligand>
</feature>
<feature type="binding site" evidence="1">
    <location>
        <position position="229"/>
    </location>
    <ligand>
        <name>UTP</name>
        <dbReference type="ChEBI" id="CHEBI:46398"/>
    </ligand>
</feature>
<feature type="binding site" evidence="1">
    <location>
        <position position="363"/>
    </location>
    <ligand>
        <name>L-glutamine</name>
        <dbReference type="ChEBI" id="CHEBI:58359"/>
    </ligand>
</feature>
<feature type="binding site" evidence="1">
    <location>
        <begin position="391"/>
        <end position="394"/>
    </location>
    <ligand>
        <name>L-glutamine</name>
        <dbReference type="ChEBI" id="CHEBI:58359"/>
    </ligand>
</feature>
<feature type="binding site" evidence="1">
    <location>
        <position position="414"/>
    </location>
    <ligand>
        <name>L-glutamine</name>
        <dbReference type="ChEBI" id="CHEBI:58359"/>
    </ligand>
</feature>
<feature type="binding site" evidence="1">
    <location>
        <position position="471"/>
    </location>
    <ligand>
        <name>L-glutamine</name>
        <dbReference type="ChEBI" id="CHEBI:58359"/>
    </ligand>
</feature>
<evidence type="ECO:0000255" key="1">
    <source>
        <dbReference type="HAMAP-Rule" id="MF_01227"/>
    </source>
</evidence>
<dbReference type="EC" id="6.3.4.2" evidence="1"/>
<dbReference type="EMBL" id="CP001099">
    <property type="protein sequence ID" value="ACF10525.1"/>
    <property type="molecule type" value="Genomic_DNA"/>
</dbReference>
<dbReference type="RefSeq" id="WP_012501360.1">
    <property type="nucleotide sequence ID" value="NC_011027.1"/>
</dbReference>
<dbReference type="SMR" id="B3QRL0"/>
<dbReference type="STRING" id="517417.Cpar_0097"/>
<dbReference type="MEROPS" id="C26.964"/>
<dbReference type="KEGG" id="cpc:Cpar_0097"/>
<dbReference type="eggNOG" id="COG0504">
    <property type="taxonomic scope" value="Bacteria"/>
</dbReference>
<dbReference type="HOGENOM" id="CLU_011675_5_0_10"/>
<dbReference type="OrthoDB" id="9801107at2"/>
<dbReference type="UniPathway" id="UPA00159">
    <property type="reaction ID" value="UER00277"/>
</dbReference>
<dbReference type="Proteomes" id="UP000008811">
    <property type="component" value="Chromosome"/>
</dbReference>
<dbReference type="GO" id="GO:0005829">
    <property type="term" value="C:cytosol"/>
    <property type="evidence" value="ECO:0007669"/>
    <property type="project" value="TreeGrafter"/>
</dbReference>
<dbReference type="GO" id="GO:0005524">
    <property type="term" value="F:ATP binding"/>
    <property type="evidence" value="ECO:0007669"/>
    <property type="project" value="UniProtKB-KW"/>
</dbReference>
<dbReference type="GO" id="GO:0003883">
    <property type="term" value="F:CTP synthase activity"/>
    <property type="evidence" value="ECO:0007669"/>
    <property type="project" value="UniProtKB-UniRule"/>
</dbReference>
<dbReference type="GO" id="GO:0004359">
    <property type="term" value="F:glutaminase activity"/>
    <property type="evidence" value="ECO:0007669"/>
    <property type="project" value="RHEA"/>
</dbReference>
<dbReference type="GO" id="GO:0042802">
    <property type="term" value="F:identical protein binding"/>
    <property type="evidence" value="ECO:0007669"/>
    <property type="project" value="TreeGrafter"/>
</dbReference>
<dbReference type="GO" id="GO:0046872">
    <property type="term" value="F:metal ion binding"/>
    <property type="evidence" value="ECO:0007669"/>
    <property type="project" value="UniProtKB-KW"/>
</dbReference>
<dbReference type="GO" id="GO:0044210">
    <property type="term" value="P:'de novo' CTP biosynthetic process"/>
    <property type="evidence" value="ECO:0007669"/>
    <property type="project" value="UniProtKB-UniRule"/>
</dbReference>
<dbReference type="GO" id="GO:0019856">
    <property type="term" value="P:pyrimidine nucleobase biosynthetic process"/>
    <property type="evidence" value="ECO:0007669"/>
    <property type="project" value="TreeGrafter"/>
</dbReference>
<dbReference type="CDD" id="cd03113">
    <property type="entry name" value="CTPS_N"/>
    <property type="match status" value="1"/>
</dbReference>
<dbReference type="CDD" id="cd01746">
    <property type="entry name" value="GATase1_CTP_Synthase"/>
    <property type="match status" value="1"/>
</dbReference>
<dbReference type="FunFam" id="3.40.50.300:FF:000009">
    <property type="entry name" value="CTP synthase"/>
    <property type="match status" value="1"/>
</dbReference>
<dbReference type="FunFam" id="3.40.50.880:FF:000002">
    <property type="entry name" value="CTP synthase"/>
    <property type="match status" value="1"/>
</dbReference>
<dbReference type="Gene3D" id="3.40.50.880">
    <property type="match status" value="1"/>
</dbReference>
<dbReference type="Gene3D" id="3.40.50.300">
    <property type="entry name" value="P-loop containing nucleotide triphosphate hydrolases"/>
    <property type="match status" value="1"/>
</dbReference>
<dbReference type="HAMAP" id="MF_01227">
    <property type="entry name" value="PyrG"/>
    <property type="match status" value="1"/>
</dbReference>
<dbReference type="InterPro" id="IPR029062">
    <property type="entry name" value="Class_I_gatase-like"/>
</dbReference>
<dbReference type="InterPro" id="IPR004468">
    <property type="entry name" value="CTP_synthase"/>
</dbReference>
<dbReference type="InterPro" id="IPR017456">
    <property type="entry name" value="CTP_synthase_N"/>
</dbReference>
<dbReference type="InterPro" id="IPR017926">
    <property type="entry name" value="GATASE"/>
</dbReference>
<dbReference type="InterPro" id="IPR033828">
    <property type="entry name" value="GATase1_CTP_Synthase"/>
</dbReference>
<dbReference type="InterPro" id="IPR027417">
    <property type="entry name" value="P-loop_NTPase"/>
</dbReference>
<dbReference type="NCBIfam" id="NF003792">
    <property type="entry name" value="PRK05380.1"/>
    <property type="match status" value="1"/>
</dbReference>
<dbReference type="NCBIfam" id="TIGR00337">
    <property type="entry name" value="PyrG"/>
    <property type="match status" value="1"/>
</dbReference>
<dbReference type="PANTHER" id="PTHR11550">
    <property type="entry name" value="CTP SYNTHASE"/>
    <property type="match status" value="1"/>
</dbReference>
<dbReference type="PANTHER" id="PTHR11550:SF0">
    <property type="entry name" value="CTP SYNTHASE-RELATED"/>
    <property type="match status" value="1"/>
</dbReference>
<dbReference type="Pfam" id="PF06418">
    <property type="entry name" value="CTP_synth_N"/>
    <property type="match status" value="1"/>
</dbReference>
<dbReference type="Pfam" id="PF00117">
    <property type="entry name" value="GATase"/>
    <property type="match status" value="1"/>
</dbReference>
<dbReference type="SUPFAM" id="SSF52317">
    <property type="entry name" value="Class I glutamine amidotransferase-like"/>
    <property type="match status" value="1"/>
</dbReference>
<dbReference type="SUPFAM" id="SSF52540">
    <property type="entry name" value="P-loop containing nucleoside triphosphate hydrolases"/>
    <property type="match status" value="1"/>
</dbReference>
<dbReference type="PROSITE" id="PS51273">
    <property type="entry name" value="GATASE_TYPE_1"/>
    <property type="match status" value="1"/>
</dbReference>
<proteinExistence type="inferred from homology"/>